<sequence length="362" mass="39775">MDKFWWHAAWGLCLLPLSLAHEQIDLNITCRYAGVFHVEKNGRYSISRTEAADLCQAFNSTLPTMDQMVMALSKGFETCRYGFIEGHVVIPRIQPNAICAANHTGVYILTSNTSHYDTYCFNASAPLEEDCTSVTDLPNSFEGPVTITIVNRDGTRYSKKGEYRTHQEDIDASNTTDDDVSSGSSSEKSTSGGYVFHTYLPTIHSTADQDDPYFIGSTMATRDQDSSMDPRGNSLTVTDGSKLTEHSSGNQDSGLNSTSRPGGKPRVPEWLIVLASLLALALILAVCIAVNSRRRCGQKKKLVINSGNGKVEDRKPSELNGEASKSQEMVHLVNKEPSETPDQFMTADETRNLQNVDMKIGV</sequence>
<evidence type="ECO:0000250" key="1"/>
<evidence type="ECO:0000250" key="2">
    <source>
        <dbReference type="UniProtKB" id="P15379"/>
    </source>
</evidence>
<evidence type="ECO:0000250" key="3">
    <source>
        <dbReference type="UniProtKB" id="P16070"/>
    </source>
</evidence>
<evidence type="ECO:0000255" key="4"/>
<evidence type="ECO:0000255" key="5">
    <source>
        <dbReference type="PROSITE-ProRule" id="PRU00323"/>
    </source>
</evidence>
<evidence type="ECO:0000256" key="6">
    <source>
        <dbReference type="SAM" id="MobiDB-lite"/>
    </source>
</evidence>
<comment type="function">
    <text evidence="2 3">Cell-surface receptor that plays a role in cell-cell interactions, as well as cell adhesion and migration, helping them to sense and respond to changes in the tissue microenvironment. Participates thereby in a wide variety of cellular functions including the activation, recirculation and homing of T-lymphocytes, hematopoiesis, inflammation and response to bacterial infection. Engages, through its ectodomain, extracellular matrix components such as hyaluronan/HA, collagen, growth factors, cytokines or proteases and serves as a platform for signal transduction by assembling, via its cytoplasmic domain, protein complexes containing receptor kinases and membrane proteases. Such effectors include PKN2, the RhoGTPases RAC1 and RHOA, Rho-kinases and phospholipase C that coordinate signaling pathways promoting calcium mobilization and actin-mediated cytoskeleton reorganization essential for cell migration and adhesion.</text>
</comment>
<comment type="subunit">
    <text evidence="2 3">Interacts with PKN2 (By similarity). Interacts with TIAM1 and TIAM2 (By similarity). Interacts with HA, as well as other glycosaminoglycans, collagen, laminin, and fibronectin via its N-terminal segment. Interacts with UNC119. Interacts with PDPN (via extracellular domain); this interaction is required for PDPN-mediated directional migration and regulation of lamellipodia extension/stabilization during cell spreading and migration (By similarity). Interacts with RDX, EZR and MSN (By similarity). Interacts with EGFR (By similarity). Interacts with CD74; this complex is essential for the MIF-induced signaling cascade that results in B cell survival (By similarity).</text>
</comment>
<comment type="subcellular location">
    <subcellularLocation>
        <location evidence="2">Cell membrane</location>
        <topology evidence="2">Single-pass type I membrane protein</topology>
    </subcellularLocation>
    <subcellularLocation>
        <location evidence="2">Cell projection</location>
        <location evidence="2">Microvillus</location>
    </subcellularLocation>
    <subcellularLocation>
        <location evidence="3">Secreted</location>
    </subcellularLocation>
    <text evidence="2">Colocalizes with actin in membrane protrusions at wounding edges. Co-localizes with RDX, EZR and MSN in microvilli.</text>
</comment>
<comment type="induction">
    <text>By EBV.</text>
</comment>
<comment type="domain">
    <text evidence="1">The lectin-like LINK domain is responsible for hyaluronan binding.</text>
</comment>
<comment type="PTM">
    <text evidence="3">Phosphorylated; activation of PKC results in the dephosphorylation of Ser-326 (constitutive phosphorylation site), and the phosphorylation of Ser-292.</text>
</comment>
<comment type="PTM">
    <text evidence="3">N-glycosylated.</text>
</comment>
<comment type="PTM">
    <text evidence="3">O-glycosylated; contains chondroitin sulfate glycans which can be more or less sulfated.</text>
</comment>
<reference key="1">
    <citation type="journal article" date="1990" name="Cell">
        <title>CD44 is the principal cell surface receptor for hyaluronate.</title>
        <authorList>
            <person name="Aruffo A."/>
            <person name="Stamenkovic I."/>
            <person name="Melnick M."/>
            <person name="Underhill C.B."/>
            <person name="Seed B."/>
        </authorList>
    </citation>
    <scope>NUCLEOTIDE SEQUENCE [MRNA]</scope>
</reference>
<organism>
    <name type="scientific">Cricetulus griseus</name>
    <name type="common">Chinese hamster</name>
    <name type="synonym">Cricetulus barabensis griseus</name>
    <dbReference type="NCBI Taxonomy" id="10029"/>
    <lineage>
        <taxon>Eukaryota</taxon>
        <taxon>Metazoa</taxon>
        <taxon>Chordata</taxon>
        <taxon>Craniata</taxon>
        <taxon>Vertebrata</taxon>
        <taxon>Euteleostomi</taxon>
        <taxon>Mammalia</taxon>
        <taxon>Eutheria</taxon>
        <taxon>Euarchontoglires</taxon>
        <taxon>Glires</taxon>
        <taxon>Rodentia</taxon>
        <taxon>Myomorpha</taxon>
        <taxon>Muroidea</taxon>
        <taxon>Cricetidae</taxon>
        <taxon>Cricetinae</taxon>
        <taxon>Cricetulus</taxon>
    </lineage>
</organism>
<name>CD44_CRIGR</name>
<gene>
    <name type="primary">CD44</name>
</gene>
<feature type="signal peptide" evidence="1">
    <location>
        <begin position="1"/>
        <end position="22"/>
    </location>
</feature>
<feature type="chain" id="PRO_0000026685" description="CD44 antigen">
    <location>
        <begin position="23"/>
        <end position="362"/>
    </location>
</feature>
<feature type="topological domain" description="Extracellular" evidence="4">
    <location>
        <begin position="23"/>
        <end position="269"/>
    </location>
</feature>
<feature type="transmembrane region" description="Helical" evidence="4">
    <location>
        <begin position="270"/>
        <end position="290"/>
    </location>
</feature>
<feature type="topological domain" description="Cytoplasmic" evidence="4">
    <location>
        <begin position="291"/>
        <end position="362"/>
    </location>
</feature>
<feature type="domain" description="Link" evidence="5">
    <location>
        <begin position="34"/>
        <end position="122"/>
    </location>
</feature>
<feature type="region of interest" description="Disordered" evidence="6">
    <location>
        <begin position="158"/>
        <end position="190"/>
    </location>
</feature>
<feature type="region of interest" description="Disordered" evidence="6">
    <location>
        <begin position="211"/>
        <end position="263"/>
    </location>
</feature>
<feature type="region of interest" description="Stem">
    <location>
        <begin position="226"/>
        <end position="269"/>
    </location>
</feature>
<feature type="region of interest" description="Required for interaction with EZR, MSN and RDX and for co-localization to microvilli" evidence="2">
    <location>
        <begin position="293"/>
        <end position="311"/>
    </location>
</feature>
<feature type="region of interest" description="Disordered" evidence="6">
    <location>
        <begin position="307"/>
        <end position="327"/>
    </location>
</feature>
<feature type="compositionally biased region" description="Basic and acidic residues" evidence="6">
    <location>
        <begin position="158"/>
        <end position="169"/>
    </location>
</feature>
<feature type="compositionally biased region" description="Low complexity" evidence="6">
    <location>
        <begin position="181"/>
        <end position="190"/>
    </location>
</feature>
<feature type="compositionally biased region" description="Polar residues" evidence="6">
    <location>
        <begin position="233"/>
        <end position="260"/>
    </location>
</feature>
<feature type="binding site" evidence="1">
    <location>
        <position position="43"/>
    </location>
    <ligand>
        <name>hyaluronan</name>
        <dbReference type="ChEBI" id="CHEBI:132153"/>
    </ligand>
</feature>
<feature type="binding site" evidence="1">
    <location>
        <position position="80"/>
    </location>
    <ligand>
        <name>hyaluronan</name>
        <dbReference type="ChEBI" id="CHEBI:132153"/>
    </ligand>
</feature>
<feature type="binding site" evidence="1">
    <location>
        <position position="81"/>
    </location>
    <ligand>
        <name>hyaluronan</name>
        <dbReference type="ChEBI" id="CHEBI:132153"/>
    </ligand>
</feature>
<feature type="binding site" evidence="1">
    <location>
        <position position="107"/>
    </location>
    <ligand>
        <name>hyaluronan</name>
        <dbReference type="ChEBI" id="CHEBI:132153"/>
    </ligand>
</feature>
<feature type="modified residue" description="Phosphoserine; by PKC" evidence="3">
    <location>
        <position position="292"/>
    </location>
</feature>
<feature type="modified residue" description="Phosphoserine" evidence="3">
    <location>
        <position position="306"/>
    </location>
</feature>
<feature type="modified residue" description="Phosphoserine" evidence="2">
    <location>
        <position position="317"/>
    </location>
</feature>
<feature type="modified residue" description="Phosphoserine" evidence="3">
    <location>
        <position position="326"/>
    </location>
</feature>
<feature type="glycosylation site" description="N-linked (GlcNAc...) asparagine" evidence="4">
    <location>
        <position position="27"/>
    </location>
</feature>
<feature type="glycosylation site" description="N-linked (GlcNAc...) asparagine" evidence="4">
    <location>
        <position position="59"/>
    </location>
</feature>
<feature type="glycosylation site" description="N-linked (GlcNAc...) asparagine" evidence="4">
    <location>
        <position position="102"/>
    </location>
</feature>
<feature type="glycosylation site" description="N-linked (GlcNAc...) asparagine" evidence="4">
    <location>
        <position position="112"/>
    </location>
</feature>
<feature type="glycosylation site" description="N-linked (GlcNAc...) asparagine" evidence="4">
    <location>
        <position position="122"/>
    </location>
</feature>
<feature type="glycosylation site" description="N-linked (GlcNAc...) asparagine" evidence="4">
    <location>
        <position position="174"/>
    </location>
</feature>
<feature type="glycosylation site" description="O-linked (Xyl...) (chondroitin sulfate) serine" evidence="3">
    <location>
        <position position="182"/>
    </location>
</feature>
<feature type="glycosylation site" description="N-linked (GlcNAc...) asparagine" evidence="4">
    <location>
        <position position="256"/>
    </location>
</feature>
<feature type="disulfide bond" evidence="5">
    <location>
        <begin position="30"/>
        <end position="131"/>
    </location>
</feature>
<feature type="disulfide bond" evidence="5">
    <location>
        <begin position="55"/>
        <end position="120"/>
    </location>
</feature>
<feature type="disulfide bond" evidence="5">
    <location>
        <begin position="79"/>
        <end position="99"/>
    </location>
</feature>
<proteinExistence type="evidence at transcript level"/>
<accession>P20944</accession>
<dbReference type="EMBL" id="M33827">
    <property type="protein sequence ID" value="AAA36967.1"/>
    <property type="molecule type" value="mRNA"/>
</dbReference>
<dbReference type="PIR" id="A35616">
    <property type="entry name" value="A35616"/>
</dbReference>
<dbReference type="SMR" id="P20944"/>
<dbReference type="GlyCosmos" id="P20944">
    <property type="glycosylation" value="7 sites, No reported glycans"/>
</dbReference>
<dbReference type="eggNOG" id="ENOG502RX7Q">
    <property type="taxonomic scope" value="Eukaryota"/>
</dbReference>
<dbReference type="Proteomes" id="UP000694386">
    <property type="component" value="Unplaced"/>
</dbReference>
<dbReference type="Proteomes" id="UP001108280">
    <property type="component" value="Unplaced"/>
</dbReference>
<dbReference type="GO" id="GO:0016324">
    <property type="term" value="C:apical plasma membrane"/>
    <property type="evidence" value="ECO:0000250"/>
    <property type="project" value="UniProtKB"/>
</dbReference>
<dbReference type="GO" id="GO:0016323">
    <property type="term" value="C:basolateral plasma membrane"/>
    <property type="evidence" value="ECO:0007669"/>
    <property type="project" value="TreeGrafter"/>
</dbReference>
<dbReference type="GO" id="GO:0042995">
    <property type="term" value="C:cell projection"/>
    <property type="evidence" value="ECO:0000250"/>
    <property type="project" value="UniProtKB"/>
</dbReference>
<dbReference type="GO" id="GO:0005576">
    <property type="term" value="C:extracellular region"/>
    <property type="evidence" value="ECO:0007669"/>
    <property type="project" value="UniProtKB-SubCell"/>
</dbReference>
<dbReference type="GO" id="GO:0031258">
    <property type="term" value="C:lamellipodium membrane"/>
    <property type="evidence" value="ECO:0000250"/>
    <property type="project" value="UniProtKB"/>
</dbReference>
<dbReference type="GO" id="GO:0035692">
    <property type="term" value="C:macrophage migration inhibitory factor receptor complex"/>
    <property type="evidence" value="ECO:0007669"/>
    <property type="project" value="TreeGrafter"/>
</dbReference>
<dbReference type="GO" id="GO:0005902">
    <property type="term" value="C:microvillus"/>
    <property type="evidence" value="ECO:0000250"/>
    <property type="project" value="UniProtKB"/>
</dbReference>
<dbReference type="GO" id="GO:0005886">
    <property type="term" value="C:plasma membrane"/>
    <property type="evidence" value="ECO:0000250"/>
    <property type="project" value="UniProtKB"/>
</dbReference>
<dbReference type="GO" id="GO:0004896">
    <property type="term" value="F:cytokine receptor activity"/>
    <property type="evidence" value="ECO:0007669"/>
    <property type="project" value="TreeGrafter"/>
</dbReference>
<dbReference type="GO" id="GO:0005540">
    <property type="term" value="F:hyaluronic acid binding"/>
    <property type="evidence" value="ECO:0007669"/>
    <property type="project" value="InterPro"/>
</dbReference>
<dbReference type="GO" id="GO:0007155">
    <property type="term" value="P:cell adhesion"/>
    <property type="evidence" value="ECO:0007669"/>
    <property type="project" value="UniProtKB-KW"/>
</dbReference>
<dbReference type="GO" id="GO:0006954">
    <property type="term" value="P:inflammatory response"/>
    <property type="evidence" value="ECO:0007669"/>
    <property type="project" value="TreeGrafter"/>
</dbReference>
<dbReference type="GO" id="GO:0070374">
    <property type="term" value="P:positive regulation of ERK1 and ERK2 cascade"/>
    <property type="evidence" value="ECO:0007669"/>
    <property type="project" value="TreeGrafter"/>
</dbReference>
<dbReference type="GO" id="GO:2000392">
    <property type="term" value="P:regulation of lamellipodium morphogenesis"/>
    <property type="evidence" value="ECO:0000250"/>
    <property type="project" value="UniProtKB"/>
</dbReference>
<dbReference type="GO" id="GO:0044319">
    <property type="term" value="P:wound healing, spreading of cells"/>
    <property type="evidence" value="ECO:0000250"/>
    <property type="project" value="UniProtKB"/>
</dbReference>
<dbReference type="CDD" id="cd03516">
    <property type="entry name" value="Link_domain_CD44_like"/>
    <property type="match status" value="1"/>
</dbReference>
<dbReference type="FunFam" id="3.10.100.10:FF:000004">
    <property type="entry name" value="CD44 antigen isoform X2"/>
    <property type="match status" value="1"/>
</dbReference>
<dbReference type="Gene3D" id="3.10.100.10">
    <property type="entry name" value="Mannose-Binding Protein A, subunit A"/>
    <property type="match status" value="1"/>
</dbReference>
<dbReference type="InterPro" id="IPR016186">
    <property type="entry name" value="C-type_lectin-like/link_sf"/>
</dbReference>
<dbReference type="InterPro" id="IPR001231">
    <property type="entry name" value="CD44_antigen"/>
</dbReference>
<dbReference type="InterPro" id="IPR043210">
    <property type="entry name" value="CD44_antigen-like"/>
</dbReference>
<dbReference type="InterPro" id="IPR016187">
    <property type="entry name" value="CTDL_fold"/>
</dbReference>
<dbReference type="InterPro" id="IPR000538">
    <property type="entry name" value="Link_dom"/>
</dbReference>
<dbReference type="PANTHER" id="PTHR10225:SF6">
    <property type="entry name" value="CD44 ANTIGEN"/>
    <property type="match status" value="1"/>
</dbReference>
<dbReference type="PANTHER" id="PTHR10225">
    <property type="entry name" value="HYALURONAN RECEPTOR"/>
    <property type="match status" value="1"/>
</dbReference>
<dbReference type="Pfam" id="PF00193">
    <property type="entry name" value="Xlink"/>
    <property type="match status" value="1"/>
</dbReference>
<dbReference type="PRINTS" id="PR00658">
    <property type="entry name" value="CD44"/>
</dbReference>
<dbReference type="PRINTS" id="PR01265">
    <property type="entry name" value="LINKMODULE"/>
</dbReference>
<dbReference type="SMART" id="SM00445">
    <property type="entry name" value="LINK"/>
    <property type="match status" value="1"/>
</dbReference>
<dbReference type="SUPFAM" id="SSF56436">
    <property type="entry name" value="C-type lectin-like"/>
    <property type="match status" value="1"/>
</dbReference>
<dbReference type="PROSITE" id="PS01241">
    <property type="entry name" value="LINK_1"/>
    <property type="match status" value="1"/>
</dbReference>
<dbReference type="PROSITE" id="PS50963">
    <property type="entry name" value="LINK_2"/>
    <property type="match status" value="1"/>
</dbReference>
<protein>
    <recommendedName>
        <fullName>CD44 antigen</fullName>
    </recommendedName>
    <alternativeName>
        <fullName>Extracellular matrix receptor III</fullName>
        <shortName>ECMR-III</shortName>
    </alternativeName>
    <alternativeName>
        <fullName>GP90 lymphocyte homing/adhesion receptor</fullName>
    </alternativeName>
    <alternativeName>
        <fullName>HUTCH-I</fullName>
    </alternativeName>
    <alternativeName>
        <fullName>Hermes antigen</fullName>
    </alternativeName>
    <alternativeName>
        <fullName>Hyaluronate receptor</fullName>
    </alternativeName>
    <alternativeName>
        <fullName>Phagocytic glycoprotein 1</fullName>
        <shortName>PGP-1</shortName>
    </alternativeName>
    <alternativeName>
        <fullName>Phagocytic glycoprotein I</fullName>
        <shortName>PGP-I</shortName>
    </alternativeName>
    <cdAntigenName>CD44</cdAntigenName>
</protein>
<keyword id="KW-0130">Cell adhesion</keyword>
<keyword id="KW-1003">Cell membrane</keyword>
<keyword id="KW-0966">Cell projection</keyword>
<keyword id="KW-1015">Disulfide bond</keyword>
<keyword id="KW-0325">Glycoprotein</keyword>
<keyword id="KW-0472">Membrane</keyword>
<keyword id="KW-0597">Phosphoprotein</keyword>
<keyword id="KW-0654">Proteoglycan</keyword>
<keyword id="KW-0675">Receptor</keyword>
<keyword id="KW-0964">Secreted</keyword>
<keyword id="KW-0732">Signal</keyword>
<keyword id="KW-0812">Transmembrane</keyword>
<keyword id="KW-1133">Transmembrane helix</keyword>